<protein>
    <recommendedName>
        <fullName evidence="1">Cytochrome b6-f complex subunit 5</fullName>
    </recommendedName>
    <alternativeName>
        <fullName evidence="1">Cytochrome b6-f complex subunit PetG</fullName>
    </alternativeName>
    <alternativeName>
        <fullName evidence="1">Cytochrome b6-f complex subunit V</fullName>
    </alternativeName>
</protein>
<evidence type="ECO:0000255" key="1">
    <source>
        <dbReference type="HAMAP-Rule" id="MF_00432"/>
    </source>
</evidence>
<name>PETG_CHLSC</name>
<dbReference type="EMBL" id="EF380352">
    <property type="protein sequence ID" value="ABQ43279.1"/>
    <property type="molecule type" value="Genomic_DNA"/>
</dbReference>
<dbReference type="RefSeq" id="YP_001294117.1">
    <property type="nucleotide sequence ID" value="NC_009598.1"/>
</dbReference>
<dbReference type="SMR" id="A6MME1"/>
<dbReference type="GeneID" id="5236511"/>
<dbReference type="GO" id="GO:0009535">
    <property type="term" value="C:chloroplast thylakoid membrane"/>
    <property type="evidence" value="ECO:0007669"/>
    <property type="project" value="UniProtKB-SubCell"/>
</dbReference>
<dbReference type="GO" id="GO:0009512">
    <property type="term" value="C:cytochrome b6f complex"/>
    <property type="evidence" value="ECO:0007669"/>
    <property type="project" value="InterPro"/>
</dbReference>
<dbReference type="GO" id="GO:0045158">
    <property type="term" value="F:electron transporter, transferring electrons within cytochrome b6/f complex of photosystem II activity"/>
    <property type="evidence" value="ECO:0007669"/>
    <property type="project" value="UniProtKB-UniRule"/>
</dbReference>
<dbReference type="GO" id="GO:0017004">
    <property type="term" value="P:cytochrome complex assembly"/>
    <property type="evidence" value="ECO:0007669"/>
    <property type="project" value="UniProtKB-UniRule"/>
</dbReference>
<dbReference type="GO" id="GO:0015979">
    <property type="term" value="P:photosynthesis"/>
    <property type="evidence" value="ECO:0007669"/>
    <property type="project" value="UniProtKB-KW"/>
</dbReference>
<dbReference type="HAMAP" id="MF_00432">
    <property type="entry name" value="Cytb6_f_PetG"/>
    <property type="match status" value="1"/>
</dbReference>
<dbReference type="InterPro" id="IPR003683">
    <property type="entry name" value="Cyt_6/f_cplx_su5"/>
</dbReference>
<dbReference type="InterPro" id="IPR036099">
    <property type="entry name" value="Cyt_6/f_cplx_su5_sf"/>
</dbReference>
<dbReference type="NCBIfam" id="NF001907">
    <property type="entry name" value="PRK00665.1"/>
    <property type="match status" value="1"/>
</dbReference>
<dbReference type="Pfam" id="PF02529">
    <property type="entry name" value="PetG"/>
    <property type="match status" value="1"/>
</dbReference>
<dbReference type="PIRSF" id="PIRSF000034">
    <property type="entry name" value="Cyt_b6-f_V"/>
    <property type="match status" value="1"/>
</dbReference>
<dbReference type="SUPFAM" id="SSF103446">
    <property type="entry name" value="PetG subunit of the cytochrome b6f complex"/>
    <property type="match status" value="1"/>
</dbReference>
<proteinExistence type="inferred from homology"/>
<keyword id="KW-0150">Chloroplast</keyword>
<keyword id="KW-0249">Electron transport</keyword>
<keyword id="KW-0472">Membrane</keyword>
<keyword id="KW-0602">Photosynthesis</keyword>
<keyword id="KW-0934">Plastid</keyword>
<keyword id="KW-0793">Thylakoid</keyword>
<keyword id="KW-0812">Transmembrane</keyword>
<keyword id="KW-1133">Transmembrane helix</keyword>
<keyword id="KW-0813">Transport</keyword>
<comment type="function">
    <text evidence="1">Component of the cytochrome b6-f complex, which mediates electron transfer between photosystem II (PSII) and photosystem I (PSI), cyclic electron flow around PSI, and state transitions. PetG is required for either the stability or assembly of the cytochrome b6-f complex.</text>
</comment>
<comment type="subunit">
    <text evidence="1">The 4 large subunits of the cytochrome b6-f complex are cytochrome b6, subunit IV (17 kDa polypeptide, PetD), cytochrome f and the Rieske protein, while the 4 small subunits are PetG, PetL, PetM and PetN. The complex functions as a dimer.</text>
</comment>
<comment type="subcellular location">
    <subcellularLocation>
        <location evidence="1">Plastid</location>
        <location evidence="1">Chloroplast thylakoid membrane</location>
        <topology evidence="1">Single-pass membrane protein</topology>
    </subcellularLocation>
</comment>
<comment type="similarity">
    <text evidence="1">Belongs to the PetG family.</text>
</comment>
<reference key="1">
    <citation type="journal article" date="2007" name="Mol. Phylogenet. Evol.">
        <title>Phylogenetic and evolutionary implications of complete chloroplast genome sequences of four early-diverging angiosperms: Buxus (Buxaceae), Chloranthus (Chloranthaceae), Dioscorea (Dioscoreaceae), and Illicium (Schisandraceae).</title>
        <authorList>
            <person name="Hansen D.R."/>
            <person name="Dastidar S.G."/>
            <person name="Cai Z."/>
            <person name="Penaflor C."/>
            <person name="Kuehl J.V."/>
            <person name="Boore J.L."/>
            <person name="Jansen R.K."/>
        </authorList>
    </citation>
    <scope>NUCLEOTIDE SEQUENCE [LARGE SCALE GENOMIC DNA]</scope>
</reference>
<organism>
    <name type="scientific">Chloranthus spicatus</name>
    <name type="common">Chulantree</name>
    <name type="synonym">Nigrina spicata</name>
    <dbReference type="NCBI Taxonomy" id="13006"/>
    <lineage>
        <taxon>Eukaryota</taxon>
        <taxon>Viridiplantae</taxon>
        <taxon>Streptophyta</taxon>
        <taxon>Embryophyta</taxon>
        <taxon>Tracheophyta</taxon>
        <taxon>Spermatophyta</taxon>
        <taxon>Magnoliopsida</taxon>
        <taxon>Chloranthales</taxon>
        <taxon>Chloranthaceae</taxon>
        <taxon>Chloranthus</taxon>
    </lineage>
</organism>
<geneLocation type="chloroplast"/>
<accession>A6MME1</accession>
<sequence length="37" mass="4170">MIEVFLFGIVLGLIPITLAGLFVTAYLQYRRGDQLDL</sequence>
<feature type="chain" id="PRO_0000355376" description="Cytochrome b6-f complex subunit 5">
    <location>
        <begin position="1"/>
        <end position="37"/>
    </location>
</feature>
<feature type="transmembrane region" description="Helical" evidence="1">
    <location>
        <begin position="5"/>
        <end position="25"/>
    </location>
</feature>
<gene>
    <name evidence="1" type="primary">petG</name>
</gene>